<accession>B0TC74</accession>
<organism>
    <name type="scientific">Heliobacterium modesticaldum (strain ATCC 51547 / Ice1)</name>
    <dbReference type="NCBI Taxonomy" id="498761"/>
    <lineage>
        <taxon>Bacteria</taxon>
        <taxon>Bacillati</taxon>
        <taxon>Bacillota</taxon>
        <taxon>Clostridia</taxon>
        <taxon>Eubacteriales</taxon>
        <taxon>Heliobacteriaceae</taxon>
        <taxon>Heliomicrobium</taxon>
    </lineage>
</organism>
<protein>
    <recommendedName>
        <fullName evidence="1">Large ribosomal subunit protein uL30</fullName>
    </recommendedName>
    <alternativeName>
        <fullName evidence="2">50S ribosomal protein L30</fullName>
    </alternativeName>
</protein>
<evidence type="ECO:0000255" key="1">
    <source>
        <dbReference type="HAMAP-Rule" id="MF_01371"/>
    </source>
</evidence>
<evidence type="ECO:0000305" key="2"/>
<comment type="subunit">
    <text evidence="1">Part of the 50S ribosomal subunit.</text>
</comment>
<comment type="similarity">
    <text evidence="1">Belongs to the universal ribosomal protein uL30 family.</text>
</comment>
<proteinExistence type="inferred from homology"/>
<feature type="chain" id="PRO_1000215066" description="Large ribosomal subunit protein uL30">
    <location>
        <begin position="1"/>
        <end position="62"/>
    </location>
</feature>
<sequence>MATKLKITWVKSAIGYAKNQKLTVATLGLKKLHQSVLHDDTPAIRGMIRTVNHLVTVEEVEA</sequence>
<gene>
    <name evidence="1" type="primary">rpmD</name>
    <name type="ordered locus">Helmi_13480</name>
    <name type="ORF">HM1_1396</name>
</gene>
<reference key="1">
    <citation type="journal article" date="2008" name="J. Bacteriol.">
        <title>The genome of Heliobacterium modesticaldum, a phototrophic representative of the Firmicutes containing the simplest photosynthetic apparatus.</title>
        <authorList>
            <person name="Sattley W.M."/>
            <person name="Madigan M.T."/>
            <person name="Swingley W.D."/>
            <person name="Cheung P.C."/>
            <person name="Clocksin K.M."/>
            <person name="Conrad A.L."/>
            <person name="Dejesa L.C."/>
            <person name="Honchak B.M."/>
            <person name="Jung D.O."/>
            <person name="Karbach L.E."/>
            <person name="Kurdoglu A."/>
            <person name="Lahiri S."/>
            <person name="Mastrian S.D."/>
            <person name="Page L.E."/>
            <person name="Taylor H.L."/>
            <person name="Wang Z.T."/>
            <person name="Raymond J."/>
            <person name="Chen M."/>
            <person name="Blankenship R.E."/>
            <person name="Touchman J.W."/>
        </authorList>
    </citation>
    <scope>NUCLEOTIDE SEQUENCE [LARGE SCALE GENOMIC DNA]</scope>
    <source>
        <strain>ATCC 51547 / Ice1</strain>
    </source>
</reference>
<name>RL30_HELMI</name>
<dbReference type="EMBL" id="CP000930">
    <property type="protein sequence ID" value="ABZ83973.1"/>
    <property type="molecule type" value="Genomic_DNA"/>
</dbReference>
<dbReference type="RefSeq" id="WP_012282489.1">
    <property type="nucleotide sequence ID" value="NC_010337.2"/>
</dbReference>
<dbReference type="SMR" id="B0TC74"/>
<dbReference type="STRING" id="498761.HM1_1396"/>
<dbReference type="KEGG" id="hmo:HM1_1396"/>
<dbReference type="eggNOG" id="COG1841">
    <property type="taxonomic scope" value="Bacteria"/>
</dbReference>
<dbReference type="HOGENOM" id="CLU_131047_2_1_9"/>
<dbReference type="OrthoDB" id="9812790at2"/>
<dbReference type="Proteomes" id="UP000008550">
    <property type="component" value="Chromosome"/>
</dbReference>
<dbReference type="GO" id="GO:0022625">
    <property type="term" value="C:cytosolic large ribosomal subunit"/>
    <property type="evidence" value="ECO:0007669"/>
    <property type="project" value="TreeGrafter"/>
</dbReference>
<dbReference type="GO" id="GO:0003735">
    <property type="term" value="F:structural constituent of ribosome"/>
    <property type="evidence" value="ECO:0007669"/>
    <property type="project" value="InterPro"/>
</dbReference>
<dbReference type="GO" id="GO:0006412">
    <property type="term" value="P:translation"/>
    <property type="evidence" value="ECO:0007669"/>
    <property type="project" value="UniProtKB-UniRule"/>
</dbReference>
<dbReference type="CDD" id="cd01658">
    <property type="entry name" value="Ribosomal_L30"/>
    <property type="match status" value="1"/>
</dbReference>
<dbReference type="FunFam" id="3.30.1390.20:FF:000001">
    <property type="entry name" value="50S ribosomal protein L30"/>
    <property type="match status" value="1"/>
</dbReference>
<dbReference type="Gene3D" id="3.30.1390.20">
    <property type="entry name" value="Ribosomal protein L30, ferredoxin-like fold domain"/>
    <property type="match status" value="1"/>
</dbReference>
<dbReference type="HAMAP" id="MF_01371_B">
    <property type="entry name" value="Ribosomal_uL30_B"/>
    <property type="match status" value="1"/>
</dbReference>
<dbReference type="InterPro" id="IPR036919">
    <property type="entry name" value="Ribo_uL30_ferredoxin-like_sf"/>
</dbReference>
<dbReference type="InterPro" id="IPR005996">
    <property type="entry name" value="Ribosomal_uL30_bac-type"/>
</dbReference>
<dbReference type="InterPro" id="IPR018038">
    <property type="entry name" value="Ribosomal_uL30_CS"/>
</dbReference>
<dbReference type="InterPro" id="IPR016082">
    <property type="entry name" value="Ribosomal_uL30_ferredoxin-like"/>
</dbReference>
<dbReference type="NCBIfam" id="TIGR01308">
    <property type="entry name" value="rpmD_bact"/>
    <property type="match status" value="1"/>
</dbReference>
<dbReference type="PANTHER" id="PTHR15892:SF2">
    <property type="entry name" value="LARGE RIBOSOMAL SUBUNIT PROTEIN UL30M"/>
    <property type="match status" value="1"/>
</dbReference>
<dbReference type="PANTHER" id="PTHR15892">
    <property type="entry name" value="MITOCHONDRIAL RIBOSOMAL PROTEIN L30"/>
    <property type="match status" value="1"/>
</dbReference>
<dbReference type="Pfam" id="PF00327">
    <property type="entry name" value="Ribosomal_L30"/>
    <property type="match status" value="1"/>
</dbReference>
<dbReference type="PIRSF" id="PIRSF002211">
    <property type="entry name" value="Ribosomal_L30_bac-type"/>
    <property type="match status" value="1"/>
</dbReference>
<dbReference type="SUPFAM" id="SSF55129">
    <property type="entry name" value="Ribosomal protein L30p/L7e"/>
    <property type="match status" value="1"/>
</dbReference>
<dbReference type="PROSITE" id="PS00634">
    <property type="entry name" value="RIBOSOMAL_L30"/>
    <property type="match status" value="1"/>
</dbReference>
<keyword id="KW-1185">Reference proteome</keyword>
<keyword id="KW-0687">Ribonucleoprotein</keyword>
<keyword id="KW-0689">Ribosomal protein</keyword>